<comment type="function">
    <text evidence="1">The UvrABC repair system catalyzes the recognition and processing of DNA lesions. UvrA is an ATPase and a DNA-binding protein. A damage recognition complex composed of 2 UvrA and 2 UvrB subunits scans DNA for abnormalities. When the presence of a lesion has been verified by UvrB, the UvrA molecules dissociate.</text>
</comment>
<comment type="subunit">
    <text evidence="1">Forms a heterotetramer with UvrB during the search for lesions.</text>
</comment>
<comment type="subcellular location">
    <subcellularLocation>
        <location evidence="1">Cytoplasm</location>
    </subcellularLocation>
</comment>
<comment type="similarity">
    <text evidence="1">Belongs to the ABC transporter superfamily. UvrA family.</text>
</comment>
<protein>
    <recommendedName>
        <fullName evidence="1">UvrABC system protein A</fullName>
        <shortName evidence="1">UvrA protein</shortName>
    </recommendedName>
    <alternativeName>
        <fullName evidence="1">Excinuclease ABC subunit A</fullName>
    </alternativeName>
</protein>
<proteinExistence type="inferred from homology"/>
<dbReference type="EMBL" id="AE014291">
    <property type="protein sequence ID" value="AAN30024.1"/>
    <property type="molecule type" value="Genomic_DNA"/>
</dbReference>
<dbReference type="EMBL" id="CP002997">
    <property type="protein sequence ID" value="AEM18442.1"/>
    <property type="molecule type" value="Genomic_DNA"/>
</dbReference>
<dbReference type="RefSeq" id="WP_004690871.1">
    <property type="nucleotide sequence ID" value="NZ_KN046804.1"/>
</dbReference>
<dbReference type="SMR" id="Q8G0I9"/>
<dbReference type="GeneID" id="55590790"/>
<dbReference type="KEGG" id="bms:BR1104"/>
<dbReference type="KEGG" id="bsi:BS1330_I1100"/>
<dbReference type="PATRIC" id="fig|204722.22.peg.741"/>
<dbReference type="HOGENOM" id="CLU_001370_0_2_5"/>
<dbReference type="PhylomeDB" id="Q8G0I9"/>
<dbReference type="PRO" id="PR:Q8G0I9"/>
<dbReference type="Proteomes" id="UP000007104">
    <property type="component" value="Chromosome I"/>
</dbReference>
<dbReference type="GO" id="GO:0005737">
    <property type="term" value="C:cytoplasm"/>
    <property type="evidence" value="ECO:0007669"/>
    <property type="project" value="UniProtKB-SubCell"/>
</dbReference>
<dbReference type="GO" id="GO:0009380">
    <property type="term" value="C:excinuclease repair complex"/>
    <property type="evidence" value="ECO:0007669"/>
    <property type="project" value="InterPro"/>
</dbReference>
<dbReference type="GO" id="GO:0005524">
    <property type="term" value="F:ATP binding"/>
    <property type="evidence" value="ECO:0007669"/>
    <property type="project" value="UniProtKB-UniRule"/>
</dbReference>
<dbReference type="GO" id="GO:0016887">
    <property type="term" value="F:ATP hydrolysis activity"/>
    <property type="evidence" value="ECO:0007669"/>
    <property type="project" value="InterPro"/>
</dbReference>
<dbReference type="GO" id="GO:0003677">
    <property type="term" value="F:DNA binding"/>
    <property type="evidence" value="ECO:0007669"/>
    <property type="project" value="UniProtKB-UniRule"/>
</dbReference>
<dbReference type="GO" id="GO:0009381">
    <property type="term" value="F:excinuclease ABC activity"/>
    <property type="evidence" value="ECO:0007669"/>
    <property type="project" value="UniProtKB-UniRule"/>
</dbReference>
<dbReference type="GO" id="GO:0008270">
    <property type="term" value="F:zinc ion binding"/>
    <property type="evidence" value="ECO:0007669"/>
    <property type="project" value="UniProtKB-UniRule"/>
</dbReference>
<dbReference type="GO" id="GO:0006289">
    <property type="term" value="P:nucleotide-excision repair"/>
    <property type="evidence" value="ECO:0007669"/>
    <property type="project" value="UniProtKB-UniRule"/>
</dbReference>
<dbReference type="GO" id="GO:0009432">
    <property type="term" value="P:SOS response"/>
    <property type="evidence" value="ECO:0007669"/>
    <property type="project" value="UniProtKB-UniRule"/>
</dbReference>
<dbReference type="CDD" id="cd03270">
    <property type="entry name" value="ABC_UvrA_I"/>
    <property type="match status" value="1"/>
</dbReference>
<dbReference type="CDD" id="cd03271">
    <property type="entry name" value="ABC_UvrA_II"/>
    <property type="match status" value="1"/>
</dbReference>
<dbReference type="FunFam" id="1.20.1580.10:FF:000002">
    <property type="entry name" value="UvrABC system protein A"/>
    <property type="match status" value="1"/>
</dbReference>
<dbReference type="Gene3D" id="1.10.8.280">
    <property type="entry name" value="ABC transporter ATPase domain-like"/>
    <property type="match status" value="1"/>
</dbReference>
<dbReference type="Gene3D" id="1.20.1580.10">
    <property type="entry name" value="ABC transporter ATPase like domain"/>
    <property type="match status" value="2"/>
</dbReference>
<dbReference type="Gene3D" id="3.30.1490.20">
    <property type="entry name" value="ATP-grasp fold, A domain"/>
    <property type="match status" value="1"/>
</dbReference>
<dbReference type="Gene3D" id="3.40.50.300">
    <property type="entry name" value="P-loop containing nucleotide triphosphate hydrolases"/>
    <property type="match status" value="2"/>
</dbReference>
<dbReference type="HAMAP" id="MF_00205">
    <property type="entry name" value="UvrA"/>
    <property type="match status" value="1"/>
</dbReference>
<dbReference type="InterPro" id="IPR003439">
    <property type="entry name" value="ABC_transporter-like_ATP-bd"/>
</dbReference>
<dbReference type="InterPro" id="IPR017871">
    <property type="entry name" value="ABC_transporter-like_CS"/>
</dbReference>
<dbReference type="InterPro" id="IPR013815">
    <property type="entry name" value="ATP_grasp_subdomain_1"/>
</dbReference>
<dbReference type="InterPro" id="IPR027417">
    <property type="entry name" value="P-loop_NTPase"/>
</dbReference>
<dbReference type="InterPro" id="IPR004602">
    <property type="entry name" value="UvrA"/>
</dbReference>
<dbReference type="InterPro" id="IPR041552">
    <property type="entry name" value="UvrA_DNA-bd"/>
</dbReference>
<dbReference type="InterPro" id="IPR041102">
    <property type="entry name" value="UvrA_inter"/>
</dbReference>
<dbReference type="NCBIfam" id="NF001503">
    <property type="entry name" value="PRK00349.1"/>
    <property type="match status" value="1"/>
</dbReference>
<dbReference type="NCBIfam" id="TIGR00630">
    <property type="entry name" value="uvra"/>
    <property type="match status" value="1"/>
</dbReference>
<dbReference type="PANTHER" id="PTHR43152">
    <property type="entry name" value="UVRABC SYSTEM PROTEIN A"/>
    <property type="match status" value="1"/>
</dbReference>
<dbReference type="PANTHER" id="PTHR43152:SF3">
    <property type="entry name" value="UVRABC SYSTEM PROTEIN A"/>
    <property type="match status" value="1"/>
</dbReference>
<dbReference type="Pfam" id="PF17755">
    <property type="entry name" value="UvrA_DNA-bind"/>
    <property type="match status" value="1"/>
</dbReference>
<dbReference type="Pfam" id="PF17760">
    <property type="entry name" value="UvrA_inter"/>
    <property type="match status" value="1"/>
</dbReference>
<dbReference type="SUPFAM" id="SSF52540">
    <property type="entry name" value="P-loop containing nucleoside triphosphate hydrolases"/>
    <property type="match status" value="2"/>
</dbReference>
<dbReference type="PROSITE" id="PS00211">
    <property type="entry name" value="ABC_TRANSPORTER_1"/>
    <property type="match status" value="2"/>
</dbReference>
<dbReference type="PROSITE" id="PS50893">
    <property type="entry name" value="ABC_TRANSPORTER_2"/>
    <property type="match status" value="1"/>
</dbReference>
<gene>
    <name evidence="1" type="primary">uvrA</name>
    <name type="ordered locus">BR1104</name>
    <name type="ordered locus">BS1330_I1100</name>
</gene>
<sequence length="974" mass="107508">MSDQKFISIRGAREHNLKNVDLDLPRDKLIVMTGLSGSGKSSLAFDTIYAEGQRRYVESLSAYARQFLEMMQKPDVDQIDGLSPAISIEQKTTSRNPRSTVGTVTEIYDYMRLLFARVGIPYSPATGLPIESQTVSQMVDRVIALEEGTRLYILAPIVRGRKGEYRKELAELQKKGFQRVKVDGTFYEIADVPPLDKKYKHDIDVVVDRVVVRPDLSTRLADSLETCLKLADGLAIAEFADKPLPVGETAEGGSANKSANETHERILFSEKFACPVSGFTIPEIEPRLFSFNNPFGACPTCDGLGTQQAIDPNLIIPDESAALKDGAVAPWARSSSPYYNQTLEALGKAYGFKVSARWSELSEEARQAILYGTKGREITFHYDDGLRSYQTTKPFEGVIPNLERRWKETDSAWSREEIERFMASTPCPACNGYRLKPEALSVKIGKKHIGEITEMSIRKADAWFRDIDGSFNEKQREIAARILKEIRERLQFLNDVGLDYLTLARNSGTLSGGESQRIRLASQIGSGLTGVLYVLDEPSIGLHQRDNARLLDTLRHLRDLGNTVIVVEHDEDAILTADYVVDIGPAAGVHGGKVIAQGSPQDIMANTNSLTGKYLSGAMEVAVPAERRKISKTKRLRVVGARGNNLKNVSADIPLGTFTAVTGVSGGGKSTFLIETLFKAASRRIMGSREHPAEYDRIEGLEFLDKVIDIDQSPIGRTPRSNPATYTGAFTPIRDWFAGLPEAKARGYQPGRFSFNVKGGRCEACQGDGVIKIEMHFLPDVYVTCDVCHGKRYNRETLDVLFKGKSIADVLDMTVEEGAEFFSAVPAVRDKLETLVKVGLGYIKVGQQATTLSGGEAQRVKLAKELSRRATGRTLYILDEPTTGLHFHDVAKLLEVLHELVEQGNTVVVIEHNLEVIKTADWVIDLGPEGGDGGGEIVAVGRPEDIVQEKRSYTGQFLKELLERRPKRSSQAAE</sequence>
<keyword id="KW-0067">ATP-binding</keyword>
<keyword id="KW-0963">Cytoplasm</keyword>
<keyword id="KW-0227">DNA damage</keyword>
<keyword id="KW-0228">DNA excision</keyword>
<keyword id="KW-0234">DNA repair</keyword>
<keyword id="KW-0238">DNA-binding</keyword>
<keyword id="KW-0267">Excision nuclease</keyword>
<keyword id="KW-0479">Metal-binding</keyword>
<keyword id="KW-0547">Nucleotide-binding</keyword>
<keyword id="KW-0677">Repeat</keyword>
<keyword id="KW-0742">SOS response</keyword>
<keyword id="KW-0862">Zinc</keyword>
<keyword id="KW-0863">Zinc-finger</keyword>
<evidence type="ECO:0000255" key="1">
    <source>
        <dbReference type="HAMAP-Rule" id="MF_00205"/>
    </source>
</evidence>
<feature type="chain" id="PRO_0000093041" description="UvrABC system protein A">
    <location>
        <begin position="1"/>
        <end position="974"/>
    </location>
</feature>
<feature type="domain" description="ABC transporter 1" evidence="1">
    <location>
        <begin position="331"/>
        <end position="610"/>
    </location>
</feature>
<feature type="domain" description="ABC transporter 2" evidence="1">
    <location>
        <begin position="630"/>
        <end position="959"/>
    </location>
</feature>
<feature type="zinc finger region" description="C4-type" evidence="1">
    <location>
        <begin position="762"/>
        <end position="788"/>
    </location>
</feature>
<feature type="binding site" evidence="1">
    <location>
        <begin position="34"/>
        <end position="41"/>
    </location>
    <ligand>
        <name>ATP</name>
        <dbReference type="ChEBI" id="CHEBI:30616"/>
    </ligand>
</feature>
<feature type="binding site" evidence="1">
    <location>
        <begin position="663"/>
        <end position="670"/>
    </location>
    <ligand>
        <name>ATP</name>
        <dbReference type="ChEBI" id="CHEBI:30616"/>
    </ligand>
</feature>
<organism>
    <name type="scientific">Brucella suis biovar 1 (strain 1330)</name>
    <dbReference type="NCBI Taxonomy" id="204722"/>
    <lineage>
        <taxon>Bacteria</taxon>
        <taxon>Pseudomonadati</taxon>
        <taxon>Pseudomonadota</taxon>
        <taxon>Alphaproteobacteria</taxon>
        <taxon>Hyphomicrobiales</taxon>
        <taxon>Brucellaceae</taxon>
        <taxon>Brucella/Ochrobactrum group</taxon>
        <taxon>Brucella</taxon>
    </lineage>
</organism>
<name>UVRA_BRUSU</name>
<accession>Q8G0I9</accession>
<accession>G0KA26</accession>
<reference key="1">
    <citation type="journal article" date="2002" name="Proc. Natl. Acad. Sci. U.S.A.">
        <title>The Brucella suis genome reveals fundamental similarities between animal and plant pathogens and symbionts.</title>
        <authorList>
            <person name="Paulsen I.T."/>
            <person name="Seshadri R."/>
            <person name="Nelson K.E."/>
            <person name="Eisen J.A."/>
            <person name="Heidelberg J.F."/>
            <person name="Read T.D."/>
            <person name="Dodson R.J."/>
            <person name="Umayam L.A."/>
            <person name="Brinkac L.M."/>
            <person name="Beanan M.J."/>
            <person name="Daugherty S.C."/>
            <person name="DeBoy R.T."/>
            <person name="Durkin A.S."/>
            <person name="Kolonay J.F."/>
            <person name="Madupu R."/>
            <person name="Nelson W.C."/>
            <person name="Ayodeji B."/>
            <person name="Kraul M."/>
            <person name="Shetty J."/>
            <person name="Malek J.A."/>
            <person name="Van Aken S.E."/>
            <person name="Riedmuller S."/>
            <person name="Tettelin H."/>
            <person name="Gill S.R."/>
            <person name="White O."/>
            <person name="Salzberg S.L."/>
            <person name="Hoover D.L."/>
            <person name="Lindler L.E."/>
            <person name="Halling S.M."/>
            <person name="Boyle S.M."/>
            <person name="Fraser C.M."/>
        </authorList>
    </citation>
    <scope>NUCLEOTIDE SEQUENCE [LARGE SCALE GENOMIC DNA]</scope>
    <source>
        <strain>1330</strain>
    </source>
</reference>
<reference key="2">
    <citation type="journal article" date="2011" name="J. Bacteriol.">
        <title>Revised genome sequence of Brucella suis 1330.</title>
        <authorList>
            <person name="Tae H."/>
            <person name="Shallom S."/>
            <person name="Settlage R."/>
            <person name="Preston D."/>
            <person name="Adams L.G."/>
            <person name="Garner H.R."/>
        </authorList>
    </citation>
    <scope>NUCLEOTIDE SEQUENCE [LARGE SCALE GENOMIC DNA]</scope>
    <source>
        <strain>1330</strain>
    </source>
</reference>